<organism>
    <name type="scientific">Bordetella bronchiseptica (strain ATCC BAA-588 / NCTC 13252 / RB50)</name>
    <name type="common">Alcaligenes bronchisepticus</name>
    <dbReference type="NCBI Taxonomy" id="257310"/>
    <lineage>
        <taxon>Bacteria</taxon>
        <taxon>Pseudomonadati</taxon>
        <taxon>Pseudomonadota</taxon>
        <taxon>Betaproteobacteria</taxon>
        <taxon>Burkholderiales</taxon>
        <taxon>Alcaligenaceae</taxon>
        <taxon>Bordetella</taxon>
    </lineage>
</organism>
<gene>
    <name evidence="1" type="primary">rdgC</name>
    <name type="ordered locus">BB2061</name>
</gene>
<evidence type="ECO:0000255" key="1">
    <source>
        <dbReference type="HAMAP-Rule" id="MF_00194"/>
    </source>
</evidence>
<feature type="chain" id="PRO_1000021202" description="Recombination-associated protein RdgC">
    <location>
        <begin position="1"/>
        <end position="299"/>
    </location>
</feature>
<sequence length="299" mass="33503">MWFKNLKIYRLSAPWALNGDQLEECLARFAYQGGNNLEMQSLGWISPRENGLLAHTLNGQILLTLRAEKKLLPTTVVNQVAKARAQEIEEQQGYKPGRKQMKEIKERVTDELLPKAFSIYRDTRVWIDTVNHWLVIDAAASAKADEVIGLLVKTIDPLPLDNLYVEQSPAAAMTGWLAADEAPANFSIDQDTELRASGESRAAIRYVKHSIDVDDVRRHIQSGKQCTRLAMTWADRVSFVLTESLDVKRVAPLDVLKENPDAATQNDDEKFDSDMTLMTGEVAKLLAELVDSLGGEKRV</sequence>
<keyword id="KW-0963">Cytoplasm</keyword>
<keyword id="KW-0233">DNA recombination</keyword>
<protein>
    <recommendedName>
        <fullName evidence="1">Recombination-associated protein RdgC</fullName>
    </recommendedName>
</protein>
<reference key="1">
    <citation type="journal article" date="2003" name="Nat. Genet.">
        <title>Comparative analysis of the genome sequences of Bordetella pertussis, Bordetella parapertussis and Bordetella bronchiseptica.</title>
        <authorList>
            <person name="Parkhill J."/>
            <person name="Sebaihia M."/>
            <person name="Preston A."/>
            <person name="Murphy L.D."/>
            <person name="Thomson N.R."/>
            <person name="Harris D.E."/>
            <person name="Holden M.T.G."/>
            <person name="Churcher C.M."/>
            <person name="Bentley S.D."/>
            <person name="Mungall K.L."/>
            <person name="Cerdeno-Tarraga A.-M."/>
            <person name="Temple L."/>
            <person name="James K.D."/>
            <person name="Harris B."/>
            <person name="Quail M.A."/>
            <person name="Achtman M."/>
            <person name="Atkin R."/>
            <person name="Baker S."/>
            <person name="Basham D."/>
            <person name="Bason N."/>
            <person name="Cherevach I."/>
            <person name="Chillingworth T."/>
            <person name="Collins M."/>
            <person name="Cronin A."/>
            <person name="Davis P."/>
            <person name="Doggett J."/>
            <person name="Feltwell T."/>
            <person name="Goble A."/>
            <person name="Hamlin N."/>
            <person name="Hauser H."/>
            <person name="Holroyd S."/>
            <person name="Jagels K."/>
            <person name="Leather S."/>
            <person name="Moule S."/>
            <person name="Norberczak H."/>
            <person name="O'Neil S."/>
            <person name="Ormond D."/>
            <person name="Price C."/>
            <person name="Rabbinowitsch E."/>
            <person name="Rutter S."/>
            <person name="Sanders M."/>
            <person name="Saunders D."/>
            <person name="Seeger K."/>
            <person name="Sharp S."/>
            <person name="Simmonds M."/>
            <person name="Skelton J."/>
            <person name="Squares R."/>
            <person name="Squares S."/>
            <person name="Stevens K."/>
            <person name="Unwin L."/>
            <person name="Whitehead S."/>
            <person name="Barrell B.G."/>
            <person name="Maskell D.J."/>
        </authorList>
    </citation>
    <scope>NUCLEOTIDE SEQUENCE [LARGE SCALE GENOMIC DNA]</scope>
    <source>
        <strain>ATCC BAA-588 / NCTC 13252 / RB50</strain>
    </source>
</reference>
<name>RDGC_BORBR</name>
<accession>Q7WKP4</accession>
<proteinExistence type="inferred from homology"/>
<comment type="function">
    <text evidence="1">May be involved in recombination.</text>
</comment>
<comment type="subcellular location">
    <subcellularLocation>
        <location evidence="1">Cytoplasm</location>
        <location evidence="1">Nucleoid</location>
    </subcellularLocation>
</comment>
<comment type="similarity">
    <text evidence="1">Belongs to the RdgC family.</text>
</comment>
<dbReference type="EMBL" id="BX640443">
    <property type="protein sequence ID" value="CAE32557.1"/>
    <property type="molecule type" value="Genomic_DNA"/>
</dbReference>
<dbReference type="RefSeq" id="WP_003812788.1">
    <property type="nucleotide sequence ID" value="NC_002927.3"/>
</dbReference>
<dbReference type="SMR" id="Q7WKP4"/>
<dbReference type="DNASU" id="2662003"/>
<dbReference type="KEGG" id="bbr:BB2061"/>
<dbReference type="eggNOG" id="COG2974">
    <property type="taxonomic scope" value="Bacteria"/>
</dbReference>
<dbReference type="HOGENOM" id="CLU_052038_0_1_4"/>
<dbReference type="Proteomes" id="UP000001027">
    <property type="component" value="Chromosome"/>
</dbReference>
<dbReference type="GO" id="GO:0043590">
    <property type="term" value="C:bacterial nucleoid"/>
    <property type="evidence" value="ECO:0007669"/>
    <property type="project" value="TreeGrafter"/>
</dbReference>
<dbReference type="GO" id="GO:0005737">
    <property type="term" value="C:cytoplasm"/>
    <property type="evidence" value="ECO:0007669"/>
    <property type="project" value="UniProtKB-UniRule"/>
</dbReference>
<dbReference type="GO" id="GO:0003690">
    <property type="term" value="F:double-stranded DNA binding"/>
    <property type="evidence" value="ECO:0007669"/>
    <property type="project" value="TreeGrafter"/>
</dbReference>
<dbReference type="GO" id="GO:0006310">
    <property type="term" value="P:DNA recombination"/>
    <property type="evidence" value="ECO:0007669"/>
    <property type="project" value="UniProtKB-UniRule"/>
</dbReference>
<dbReference type="GO" id="GO:0000018">
    <property type="term" value="P:regulation of DNA recombination"/>
    <property type="evidence" value="ECO:0007669"/>
    <property type="project" value="TreeGrafter"/>
</dbReference>
<dbReference type="HAMAP" id="MF_00194">
    <property type="entry name" value="RdgC"/>
    <property type="match status" value="1"/>
</dbReference>
<dbReference type="InterPro" id="IPR007476">
    <property type="entry name" value="RdgC"/>
</dbReference>
<dbReference type="NCBIfam" id="NF001463">
    <property type="entry name" value="PRK00321.1-4"/>
    <property type="match status" value="1"/>
</dbReference>
<dbReference type="NCBIfam" id="NF001464">
    <property type="entry name" value="PRK00321.1-5"/>
    <property type="match status" value="1"/>
</dbReference>
<dbReference type="PANTHER" id="PTHR38103">
    <property type="entry name" value="RECOMBINATION-ASSOCIATED PROTEIN RDGC"/>
    <property type="match status" value="1"/>
</dbReference>
<dbReference type="PANTHER" id="PTHR38103:SF1">
    <property type="entry name" value="RECOMBINATION-ASSOCIATED PROTEIN RDGC"/>
    <property type="match status" value="1"/>
</dbReference>
<dbReference type="Pfam" id="PF04381">
    <property type="entry name" value="RdgC"/>
    <property type="match status" value="1"/>
</dbReference>